<name>THIM_CLOK1</name>
<organism>
    <name type="scientific">Clostridium kluyveri (strain NBRC 12016)</name>
    <dbReference type="NCBI Taxonomy" id="583346"/>
    <lineage>
        <taxon>Bacteria</taxon>
        <taxon>Bacillati</taxon>
        <taxon>Bacillota</taxon>
        <taxon>Clostridia</taxon>
        <taxon>Eubacteriales</taxon>
        <taxon>Clostridiaceae</taxon>
        <taxon>Clostridium</taxon>
    </lineage>
</organism>
<gene>
    <name evidence="1" type="primary">thiM</name>
    <name type="ordered locus">CKR_2588</name>
</gene>
<feature type="chain" id="PRO_1000198114" description="Hydroxyethylthiazole kinase">
    <location>
        <begin position="1"/>
        <end position="269"/>
    </location>
</feature>
<feature type="binding site" evidence="1">
    <location>
        <position position="48"/>
    </location>
    <ligand>
        <name>substrate</name>
    </ligand>
</feature>
<feature type="binding site" evidence="1">
    <location>
        <position position="124"/>
    </location>
    <ligand>
        <name>ATP</name>
        <dbReference type="ChEBI" id="CHEBI:30616"/>
    </ligand>
</feature>
<feature type="binding site" evidence="1">
    <location>
        <position position="170"/>
    </location>
    <ligand>
        <name>ATP</name>
        <dbReference type="ChEBI" id="CHEBI:30616"/>
    </ligand>
</feature>
<feature type="binding site" evidence="1">
    <location>
        <position position="197"/>
    </location>
    <ligand>
        <name>substrate</name>
    </ligand>
</feature>
<proteinExistence type="inferred from homology"/>
<comment type="function">
    <text evidence="1">Catalyzes the phosphorylation of the hydroxyl group of 4-methyl-5-beta-hydroxyethylthiazole (THZ).</text>
</comment>
<comment type="catalytic activity">
    <reaction evidence="1">
        <text>5-(2-hydroxyethyl)-4-methylthiazole + ATP = 4-methyl-5-(2-phosphooxyethyl)-thiazole + ADP + H(+)</text>
        <dbReference type="Rhea" id="RHEA:24212"/>
        <dbReference type="ChEBI" id="CHEBI:15378"/>
        <dbReference type="ChEBI" id="CHEBI:17957"/>
        <dbReference type="ChEBI" id="CHEBI:30616"/>
        <dbReference type="ChEBI" id="CHEBI:58296"/>
        <dbReference type="ChEBI" id="CHEBI:456216"/>
        <dbReference type="EC" id="2.7.1.50"/>
    </reaction>
</comment>
<comment type="cofactor">
    <cofactor evidence="1">
        <name>Mg(2+)</name>
        <dbReference type="ChEBI" id="CHEBI:18420"/>
    </cofactor>
</comment>
<comment type="pathway">
    <text evidence="1">Cofactor biosynthesis; thiamine diphosphate biosynthesis; 4-methyl-5-(2-phosphoethyl)-thiazole from 5-(2-hydroxyethyl)-4-methylthiazole: step 1/1.</text>
</comment>
<comment type="similarity">
    <text evidence="1">Belongs to the Thz kinase family.</text>
</comment>
<reference key="1">
    <citation type="submission" date="2005-09" db="EMBL/GenBank/DDBJ databases">
        <title>Complete genome sequence of Clostridium kluyveri and comparative genomics of Clostridia species.</title>
        <authorList>
            <person name="Inui M."/>
            <person name="Nonaka H."/>
            <person name="Shinoda Y."/>
            <person name="Ikenaga Y."/>
            <person name="Abe M."/>
            <person name="Naito K."/>
            <person name="Vertes A.A."/>
            <person name="Yukawa H."/>
        </authorList>
    </citation>
    <scope>NUCLEOTIDE SEQUENCE [LARGE SCALE GENOMIC DNA]</scope>
    <source>
        <strain>NBRC 12016</strain>
    </source>
</reference>
<protein>
    <recommendedName>
        <fullName evidence="1">Hydroxyethylthiazole kinase</fullName>
        <ecNumber evidence="1">2.7.1.50</ecNumber>
    </recommendedName>
    <alternativeName>
        <fullName evidence="1">4-methyl-5-beta-hydroxyethylthiazole kinase</fullName>
        <shortName evidence="1">TH kinase</shortName>
        <shortName evidence="1">Thz kinase</shortName>
    </alternativeName>
</protein>
<evidence type="ECO:0000255" key="1">
    <source>
        <dbReference type="HAMAP-Rule" id="MF_00228"/>
    </source>
</evidence>
<dbReference type="EC" id="2.7.1.50" evidence="1"/>
<dbReference type="EMBL" id="AP009049">
    <property type="protein sequence ID" value="BAH07639.1"/>
    <property type="molecule type" value="Genomic_DNA"/>
</dbReference>
<dbReference type="RefSeq" id="WP_012103262.1">
    <property type="nucleotide sequence ID" value="NC_011837.1"/>
</dbReference>
<dbReference type="SMR" id="B9E564"/>
<dbReference type="KEGG" id="ckr:CKR_2588"/>
<dbReference type="HOGENOM" id="CLU_019943_0_0_9"/>
<dbReference type="UniPathway" id="UPA00060">
    <property type="reaction ID" value="UER00139"/>
</dbReference>
<dbReference type="Proteomes" id="UP000007969">
    <property type="component" value="Chromosome"/>
</dbReference>
<dbReference type="GO" id="GO:0005524">
    <property type="term" value="F:ATP binding"/>
    <property type="evidence" value="ECO:0007669"/>
    <property type="project" value="UniProtKB-UniRule"/>
</dbReference>
<dbReference type="GO" id="GO:0004417">
    <property type="term" value="F:hydroxyethylthiazole kinase activity"/>
    <property type="evidence" value="ECO:0007669"/>
    <property type="project" value="UniProtKB-UniRule"/>
</dbReference>
<dbReference type="GO" id="GO:0000287">
    <property type="term" value="F:magnesium ion binding"/>
    <property type="evidence" value="ECO:0007669"/>
    <property type="project" value="UniProtKB-UniRule"/>
</dbReference>
<dbReference type="GO" id="GO:0009228">
    <property type="term" value="P:thiamine biosynthetic process"/>
    <property type="evidence" value="ECO:0007669"/>
    <property type="project" value="UniProtKB-KW"/>
</dbReference>
<dbReference type="GO" id="GO:0009229">
    <property type="term" value="P:thiamine diphosphate biosynthetic process"/>
    <property type="evidence" value="ECO:0007669"/>
    <property type="project" value="UniProtKB-UniRule"/>
</dbReference>
<dbReference type="CDD" id="cd01170">
    <property type="entry name" value="THZ_kinase"/>
    <property type="match status" value="1"/>
</dbReference>
<dbReference type="Gene3D" id="3.40.1190.20">
    <property type="match status" value="1"/>
</dbReference>
<dbReference type="HAMAP" id="MF_00228">
    <property type="entry name" value="Thz_kinase"/>
    <property type="match status" value="1"/>
</dbReference>
<dbReference type="InterPro" id="IPR000417">
    <property type="entry name" value="Hyethyz_kinase"/>
</dbReference>
<dbReference type="InterPro" id="IPR029056">
    <property type="entry name" value="Ribokinase-like"/>
</dbReference>
<dbReference type="NCBIfam" id="NF006830">
    <property type="entry name" value="PRK09355.1"/>
    <property type="match status" value="1"/>
</dbReference>
<dbReference type="NCBIfam" id="TIGR00694">
    <property type="entry name" value="thiM"/>
    <property type="match status" value="1"/>
</dbReference>
<dbReference type="Pfam" id="PF02110">
    <property type="entry name" value="HK"/>
    <property type="match status" value="1"/>
</dbReference>
<dbReference type="PIRSF" id="PIRSF000513">
    <property type="entry name" value="Thz_kinase"/>
    <property type="match status" value="1"/>
</dbReference>
<dbReference type="PRINTS" id="PR01099">
    <property type="entry name" value="HYETHTZKNASE"/>
</dbReference>
<dbReference type="SUPFAM" id="SSF53613">
    <property type="entry name" value="Ribokinase-like"/>
    <property type="match status" value="1"/>
</dbReference>
<accession>B9E564</accession>
<sequence>MNDLKLDKVSKVLKEVRKSVPLVHCITNYVTINDCANILLSYGASPAMCEAYDEVFDFVKISSALYINIGTFTREQESSAILAAVSAKTHNIPVVLDPVACAAIPKKIQFIDKLFKVGRVDVIKGNIGEIKFLAGETSNVKGVDSLEDGEGALECSRILSEKYNCVVAATGKKDFIVQGKNSAIIENGTEMLTNITGAGCMLGALCAAACGAFEDKFMAVVGAILSINIASEEAYKEAKAPGSFRVKLIDCIYELSEEKLKKEGKIAWN</sequence>
<keyword id="KW-0067">ATP-binding</keyword>
<keyword id="KW-0418">Kinase</keyword>
<keyword id="KW-0460">Magnesium</keyword>
<keyword id="KW-0479">Metal-binding</keyword>
<keyword id="KW-0547">Nucleotide-binding</keyword>
<keyword id="KW-0784">Thiamine biosynthesis</keyword>
<keyword id="KW-0808">Transferase</keyword>